<name>URE2_PHOLL</name>
<proteinExistence type="inferred from homology"/>
<sequence>MEKNNKEDVTPLGGYILAKDPISFNEDRPVIQLRVRNSGDRPIQVGSHFHFFEVNKALQFNRAAAFGKRLNITATTAIRFEPGDEIEVSLIPIGGKQNVYGFNNLVDGWAGKSPVAIDEPVETTWLHAG</sequence>
<dbReference type="EC" id="3.5.1.5" evidence="1"/>
<dbReference type="EMBL" id="BX571866">
    <property type="protein sequence ID" value="CAE14465.1"/>
    <property type="molecule type" value="Genomic_DNA"/>
</dbReference>
<dbReference type="RefSeq" id="WP_011146426.1">
    <property type="nucleotide sequence ID" value="NC_005126.1"/>
</dbReference>
<dbReference type="SMR" id="Q7N4Y8"/>
<dbReference type="STRING" id="243265.plu2172"/>
<dbReference type="GeneID" id="48848450"/>
<dbReference type="KEGG" id="plu:plu2172"/>
<dbReference type="eggNOG" id="COG0832">
    <property type="taxonomic scope" value="Bacteria"/>
</dbReference>
<dbReference type="HOGENOM" id="CLU_129707_2_0_6"/>
<dbReference type="OrthoDB" id="9797217at2"/>
<dbReference type="UniPathway" id="UPA00258">
    <property type="reaction ID" value="UER00370"/>
</dbReference>
<dbReference type="Proteomes" id="UP000002514">
    <property type="component" value="Chromosome"/>
</dbReference>
<dbReference type="GO" id="GO:0035550">
    <property type="term" value="C:urease complex"/>
    <property type="evidence" value="ECO:0007669"/>
    <property type="project" value="InterPro"/>
</dbReference>
<dbReference type="GO" id="GO:0009039">
    <property type="term" value="F:urease activity"/>
    <property type="evidence" value="ECO:0007669"/>
    <property type="project" value="UniProtKB-UniRule"/>
</dbReference>
<dbReference type="GO" id="GO:0043419">
    <property type="term" value="P:urea catabolic process"/>
    <property type="evidence" value="ECO:0007669"/>
    <property type="project" value="UniProtKB-UniRule"/>
</dbReference>
<dbReference type="CDD" id="cd00407">
    <property type="entry name" value="Urease_beta"/>
    <property type="match status" value="1"/>
</dbReference>
<dbReference type="Gene3D" id="2.10.150.10">
    <property type="entry name" value="Urease, beta subunit"/>
    <property type="match status" value="1"/>
</dbReference>
<dbReference type="HAMAP" id="MF_01954">
    <property type="entry name" value="Urease_beta"/>
    <property type="match status" value="1"/>
</dbReference>
<dbReference type="InterPro" id="IPR002019">
    <property type="entry name" value="Urease_beta-like"/>
</dbReference>
<dbReference type="InterPro" id="IPR036461">
    <property type="entry name" value="Urease_betasu_sf"/>
</dbReference>
<dbReference type="InterPro" id="IPR050069">
    <property type="entry name" value="Urease_subunit"/>
</dbReference>
<dbReference type="NCBIfam" id="NF009682">
    <property type="entry name" value="PRK13203.1"/>
    <property type="match status" value="1"/>
</dbReference>
<dbReference type="NCBIfam" id="TIGR00192">
    <property type="entry name" value="urease_beta"/>
    <property type="match status" value="1"/>
</dbReference>
<dbReference type="PANTHER" id="PTHR33569">
    <property type="entry name" value="UREASE"/>
    <property type="match status" value="1"/>
</dbReference>
<dbReference type="PANTHER" id="PTHR33569:SF1">
    <property type="entry name" value="UREASE"/>
    <property type="match status" value="1"/>
</dbReference>
<dbReference type="Pfam" id="PF00699">
    <property type="entry name" value="Urease_beta"/>
    <property type="match status" value="1"/>
</dbReference>
<dbReference type="SUPFAM" id="SSF51278">
    <property type="entry name" value="Urease, beta-subunit"/>
    <property type="match status" value="1"/>
</dbReference>
<organism>
    <name type="scientific">Photorhabdus laumondii subsp. laumondii (strain DSM 15139 / CIP 105565 / TT01)</name>
    <name type="common">Photorhabdus luminescens subsp. laumondii</name>
    <dbReference type="NCBI Taxonomy" id="243265"/>
    <lineage>
        <taxon>Bacteria</taxon>
        <taxon>Pseudomonadati</taxon>
        <taxon>Pseudomonadota</taxon>
        <taxon>Gammaproteobacteria</taxon>
        <taxon>Enterobacterales</taxon>
        <taxon>Morganellaceae</taxon>
        <taxon>Photorhabdus</taxon>
    </lineage>
</organism>
<gene>
    <name evidence="1" type="primary">ureB</name>
    <name type="ordered locus">plu2172</name>
</gene>
<keyword id="KW-0963">Cytoplasm</keyword>
<keyword id="KW-0378">Hydrolase</keyword>
<keyword id="KW-1185">Reference proteome</keyword>
<accession>Q7N4Y8</accession>
<comment type="catalytic activity">
    <reaction evidence="1">
        <text>urea + 2 H2O + H(+) = hydrogencarbonate + 2 NH4(+)</text>
        <dbReference type="Rhea" id="RHEA:20557"/>
        <dbReference type="ChEBI" id="CHEBI:15377"/>
        <dbReference type="ChEBI" id="CHEBI:15378"/>
        <dbReference type="ChEBI" id="CHEBI:16199"/>
        <dbReference type="ChEBI" id="CHEBI:17544"/>
        <dbReference type="ChEBI" id="CHEBI:28938"/>
        <dbReference type="EC" id="3.5.1.5"/>
    </reaction>
</comment>
<comment type="pathway">
    <text evidence="1">Nitrogen metabolism; urea degradation; CO(2) and NH(3) from urea (urease route): step 1/1.</text>
</comment>
<comment type="subunit">
    <text evidence="1">Heterotrimer of UreA (gamma), UreB (beta) and UreC (alpha) subunits. Three heterotrimers associate to form the active enzyme.</text>
</comment>
<comment type="subcellular location">
    <subcellularLocation>
        <location evidence="1">Cytoplasm</location>
    </subcellularLocation>
</comment>
<comment type="similarity">
    <text evidence="1">Belongs to the urease beta subunit family.</text>
</comment>
<evidence type="ECO:0000255" key="1">
    <source>
        <dbReference type="HAMAP-Rule" id="MF_01954"/>
    </source>
</evidence>
<reference key="1">
    <citation type="journal article" date="2003" name="Nat. Biotechnol.">
        <title>The genome sequence of the entomopathogenic bacterium Photorhabdus luminescens.</title>
        <authorList>
            <person name="Duchaud E."/>
            <person name="Rusniok C."/>
            <person name="Frangeul L."/>
            <person name="Buchrieser C."/>
            <person name="Givaudan A."/>
            <person name="Taourit S."/>
            <person name="Bocs S."/>
            <person name="Boursaux-Eude C."/>
            <person name="Chandler M."/>
            <person name="Charles J.-F."/>
            <person name="Dassa E."/>
            <person name="Derose R."/>
            <person name="Derzelle S."/>
            <person name="Freyssinet G."/>
            <person name="Gaudriault S."/>
            <person name="Medigue C."/>
            <person name="Lanois A."/>
            <person name="Powell K."/>
            <person name="Siguier P."/>
            <person name="Vincent R."/>
            <person name="Wingate V."/>
            <person name="Zouine M."/>
            <person name="Glaser P."/>
            <person name="Boemare N."/>
            <person name="Danchin A."/>
            <person name="Kunst F."/>
        </authorList>
    </citation>
    <scope>NUCLEOTIDE SEQUENCE [LARGE SCALE GENOMIC DNA]</scope>
    <source>
        <strain>DSM 15139 / CIP 105565 / TT01</strain>
    </source>
</reference>
<feature type="chain" id="PRO_0000234254" description="Urease subunit beta">
    <location>
        <begin position="1"/>
        <end position="129"/>
    </location>
</feature>
<protein>
    <recommendedName>
        <fullName evidence="1">Urease subunit beta</fullName>
        <ecNumber evidence="1">3.5.1.5</ecNumber>
    </recommendedName>
    <alternativeName>
        <fullName evidence="1">Urea amidohydrolase subunit beta</fullName>
    </alternativeName>
</protein>